<protein>
    <recommendedName>
        <fullName evidence="1">tRNA U34 carboxymethyltransferase</fullName>
        <ecNumber evidence="1">2.5.1.-</ecNumber>
    </recommendedName>
</protein>
<sequence length="330" mass="37868">MISFSSFYKQISDSSLQHWLETLPSILGQWQREHKHGSLPKWEKVLNKLHYPEADIIDFKTSVKIGSGDQLSDGERQKLENLLAIFKPWRKGPYSLHGIEIDTEWRSDWKWERVVPHISPLENRTVLDVGCGSGYHMWRMLGEGAKHVVGIDPSPLFMCQFEAVKRLAGNEQPIHFLPLGIEELPALDAFDTVFSMGVLYHRRSPIDHIFQLRDQLRVGGELVLETLVIDGDENTVLMPTDRYGKMNNVWFLPSVEMLMLWLKKCDFTDIRCVDVDVTSLAEQRSTPWMPNESLVDYLDPNDVSLTVEGYPAPKRATIIATKNQPNKDLI</sequence>
<keyword id="KW-0808">Transferase</keyword>
<keyword id="KW-0819">tRNA processing</keyword>
<gene>
    <name evidence="1" type="primary">cmoB</name>
    <name type="ordered locus">Shal_1915</name>
</gene>
<feature type="chain" id="PRO_1000087973" description="tRNA U34 carboxymethyltransferase">
    <location>
        <begin position="1"/>
        <end position="330"/>
    </location>
</feature>
<feature type="binding site" evidence="1">
    <location>
        <position position="91"/>
    </location>
    <ligand>
        <name>carboxy-S-adenosyl-L-methionine</name>
        <dbReference type="ChEBI" id="CHEBI:134278"/>
    </ligand>
</feature>
<feature type="binding site" evidence="1">
    <location>
        <position position="105"/>
    </location>
    <ligand>
        <name>carboxy-S-adenosyl-L-methionine</name>
        <dbReference type="ChEBI" id="CHEBI:134278"/>
    </ligand>
</feature>
<feature type="binding site" evidence="1">
    <location>
        <position position="110"/>
    </location>
    <ligand>
        <name>carboxy-S-adenosyl-L-methionine</name>
        <dbReference type="ChEBI" id="CHEBI:134278"/>
    </ligand>
</feature>
<feature type="binding site" evidence="1">
    <location>
        <position position="130"/>
    </location>
    <ligand>
        <name>carboxy-S-adenosyl-L-methionine</name>
        <dbReference type="ChEBI" id="CHEBI:134278"/>
    </ligand>
</feature>
<feature type="binding site" evidence="1">
    <location>
        <begin position="152"/>
        <end position="154"/>
    </location>
    <ligand>
        <name>carboxy-S-adenosyl-L-methionine</name>
        <dbReference type="ChEBI" id="CHEBI:134278"/>
    </ligand>
</feature>
<feature type="binding site" evidence="1">
    <location>
        <begin position="181"/>
        <end position="182"/>
    </location>
    <ligand>
        <name>carboxy-S-adenosyl-L-methionine</name>
        <dbReference type="ChEBI" id="CHEBI:134278"/>
    </ligand>
</feature>
<feature type="binding site" evidence="1">
    <location>
        <position position="196"/>
    </location>
    <ligand>
        <name>carboxy-S-adenosyl-L-methionine</name>
        <dbReference type="ChEBI" id="CHEBI:134278"/>
    </ligand>
</feature>
<feature type="binding site" evidence="1">
    <location>
        <position position="200"/>
    </location>
    <ligand>
        <name>carboxy-S-adenosyl-L-methionine</name>
        <dbReference type="ChEBI" id="CHEBI:134278"/>
    </ligand>
</feature>
<feature type="binding site" evidence="1">
    <location>
        <position position="315"/>
    </location>
    <ligand>
        <name>carboxy-S-adenosyl-L-methionine</name>
        <dbReference type="ChEBI" id="CHEBI:134278"/>
    </ligand>
</feature>
<name>CMOB_SHEHH</name>
<comment type="function">
    <text evidence="1">Catalyzes carboxymethyl transfer from carboxy-S-adenosyl-L-methionine (Cx-SAM) to 5-hydroxyuridine (ho5U) to form 5-carboxymethoxyuridine (cmo5U) at position 34 in tRNAs.</text>
</comment>
<comment type="catalytic activity">
    <reaction evidence="1">
        <text>carboxy-S-adenosyl-L-methionine + 5-hydroxyuridine(34) in tRNA = 5-carboxymethoxyuridine(34) in tRNA + S-adenosyl-L-homocysteine + H(+)</text>
        <dbReference type="Rhea" id="RHEA:52848"/>
        <dbReference type="Rhea" id="RHEA-COMP:13381"/>
        <dbReference type="Rhea" id="RHEA-COMP:13383"/>
        <dbReference type="ChEBI" id="CHEBI:15378"/>
        <dbReference type="ChEBI" id="CHEBI:57856"/>
        <dbReference type="ChEBI" id="CHEBI:134278"/>
        <dbReference type="ChEBI" id="CHEBI:136877"/>
        <dbReference type="ChEBI" id="CHEBI:136879"/>
    </reaction>
</comment>
<comment type="subunit">
    <text evidence="1">Homotetramer.</text>
</comment>
<comment type="similarity">
    <text evidence="1">Belongs to the class I-like SAM-binding methyltransferase superfamily. CmoB family.</text>
</comment>
<organism>
    <name type="scientific">Shewanella halifaxensis (strain HAW-EB4)</name>
    <dbReference type="NCBI Taxonomy" id="458817"/>
    <lineage>
        <taxon>Bacteria</taxon>
        <taxon>Pseudomonadati</taxon>
        <taxon>Pseudomonadota</taxon>
        <taxon>Gammaproteobacteria</taxon>
        <taxon>Alteromonadales</taxon>
        <taxon>Shewanellaceae</taxon>
        <taxon>Shewanella</taxon>
    </lineage>
</organism>
<evidence type="ECO:0000255" key="1">
    <source>
        <dbReference type="HAMAP-Rule" id="MF_01590"/>
    </source>
</evidence>
<reference key="1">
    <citation type="submission" date="2008-01" db="EMBL/GenBank/DDBJ databases">
        <title>Complete sequence of Shewanella halifaxensis HAW-EB4.</title>
        <authorList>
            <consortium name="US DOE Joint Genome Institute"/>
            <person name="Copeland A."/>
            <person name="Lucas S."/>
            <person name="Lapidus A."/>
            <person name="Glavina del Rio T."/>
            <person name="Dalin E."/>
            <person name="Tice H."/>
            <person name="Bruce D."/>
            <person name="Goodwin L."/>
            <person name="Pitluck S."/>
            <person name="Sims D."/>
            <person name="Brettin T."/>
            <person name="Detter J.C."/>
            <person name="Han C."/>
            <person name="Kuske C.R."/>
            <person name="Schmutz J."/>
            <person name="Larimer F."/>
            <person name="Land M."/>
            <person name="Hauser L."/>
            <person name="Kyrpides N."/>
            <person name="Kim E."/>
            <person name="Zhao J.-S."/>
            <person name="Richardson P."/>
        </authorList>
    </citation>
    <scope>NUCLEOTIDE SEQUENCE [LARGE SCALE GENOMIC DNA]</scope>
    <source>
        <strain>HAW-EB4</strain>
    </source>
</reference>
<proteinExistence type="inferred from homology"/>
<accession>B0TSA0</accession>
<dbReference type="EC" id="2.5.1.-" evidence="1"/>
<dbReference type="EMBL" id="CP000931">
    <property type="protein sequence ID" value="ABZ76480.1"/>
    <property type="molecule type" value="Genomic_DNA"/>
</dbReference>
<dbReference type="RefSeq" id="WP_012277012.1">
    <property type="nucleotide sequence ID" value="NC_010334.1"/>
</dbReference>
<dbReference type="SMR" id="B0TSA0"/>
<dbReference type="STRING" id="458817.Shal_1915"/>
<dbReference type="KEGG" id="shl:Shal_1915"/>
<dbReference type="eggNOG" id="COG0500">
    <property type="taxonomic scope" value="Bacteria"/>
</dbReference>
<dbReference type="HOGENOM" id="CLU_052665_0_0_6"/>
<dbReference type="OrthoDB" id="9773188at2"/>
<dbReference type="Proteomes" id="UP000001317">
    <property type="component" value="Chromosome"/>
</dbReference>
<dbReference type="GO" id="GO:0008168">
    <property type="term" value="F:methyltransferase activity"/>
    <property type="evidence" value="ECO:0007669"/>
    <property type="project" value="TreeGrafter"/>
</dbReference>
<dbReference type="GO" id="GO:0016765">
    <property type="term" value="F:transferase activity, transferring alkyl or aryl (other than methyl) groups"/>
    <property type="evidence" value="ECO:0007669"/>
    <property type="project" value="UniProtKB-UniRule"/>
</dbReference>
<dbReference type="GO" id="GO:0002098">
    <property type="term" value="P:tRNA wobble uridine modification"/>
    <property type="evidence" value="ECO:0007669"/>
    <property type="project" value="InterPro"/>
</dbReference>
<dbReference type="CDD" id="cd02440">
    <property type="entry name" value="AdoMet_MTases"/>
    <property type="match status" value="1"/>
</dbReference>
<dbReference type="Gene3D" id="3.40.50.150">
    <property type="entry name" value="Vaccinia Virus protein VP39"/>
    <property type="match status" value="1"/>
</dbReference>
<dbReference type="HAMAP" id="MF_01590">
    <property type="entry name" value="tRNA_carboxymethyltr_CmoB"/>
    <property type="match status" value="1"/>
</dbReference>
<dbReference type="InterPro" id="IPR010017">
    <property type="entry name" value="CmoB"/>
</dbReference>
<dbReference type="InterPro" id="IPR027555">
    <property type="entry name" value="Mo5U34_MeTrfas-like"/>
</dbReference>
<dbReference type="InterPro" id="IPR029063">
    <property type="entry name" value="SAM-dependent_MTases_sf"/>
</dbReference>
<dbReference type="NCBIfam" id="NF011650">
    <property type="entry name" value="PRK15068.1"/>
    <property type="match status" value="1"/>
</dbReference>
<dbReference type="NCBIfam" id="TIGR00452">
    <property type="entry name" value="tRNA 5-methoxyuridine(34)/uridine 5-oxyacetic acid(34) synthase CmoB"/>
    <property type="match status" value="1"/>
</dbReference>
<dbReference type="PANTHER" id="PTHR43464">
    <property type="entry name" value="METHYLTRANSFERASE"/>
    <property type="match status" value="1"/>
</dbReference>
<dbReference type="PANTHER" id="PTHR43464:SF95">
    <property type="entry name" value="TRNA U34 CARBOXYMETHYLTRANSFERASE"/>
    <property type="match status" value="1"/>
</dbReference>
<dbReference type="Pfam" id="PF08003">
    <property type="entry name" value="Methyltransf_9"/>
    <property type="match status" value="1"/>
</dbReference>
<dbReference type="SUPFAM" id="SSF53335">
    <property type="entry name" value="S-adenosyl-L-methionine-dependent methyltransferases"/>
    <property type="match status" value="1"/>
</dbReference>